<feature type="transit peptide" description="Chloroplast" evidence="1">
    <location>
        <begin position="1"/>
        <end position="49"/>
    </location>
</feature>
<feature type="chain" id="PRO_0000031492" description="Ribulose bisphosphate carboxylase small subunit, chloroplastic 1" evidence="1">
    <location>
        <begin position="50"/>
        <end position="173"/>
    </location>
</feature>
<comment type="function">
    <text evidence="1">RuBisCO catalyzes two reactions: the carboxylation of D-ribulose 1,5-bisphosphate, the primary event in carbon dioxide fixation, as well as the oxidative fragmentation of the pentose substrate. Both reactions occur simultaneously and in competition at the same active site. Although the small subunit is not catalytic it is essential for maximal activity.</text>
</comment>
<comment type="subunit">
    <text evidence="1">Heterohexadecamer of 8 large and 8 small subunits.</text>
</comment>
<comment type="subcellular location">
    <subcellularLocation>
        <location evidence="1">Plastid</location>
        <location evidence="1">Chloroplast</location>
    </subcellularLocation>
</comment>
<comment type="miscellaneous">
    <text evidence="1">The basic functional RuBisCO is composed of a large chain homodimer in a 'head-to-tail' conformation. In form I RuBisCO this homodimer is arranged in a barrel-like tetramer with the small subunits forming a tetrameric 'cap' on each end of the 'barrel'.</text>
</comment>
<comment type="similarity">
    <text evidence="1">Belongs to the RuBisCO small chain family.</text>
</comment>
<gene>
    <name evidence="1" type="primary">RBCS1</name>
</gene>
<sequence length="173" mass="19645">MASIPATVATVAQANMVAPFTGLKANAAFPVTKKVNDFSTLPSNGGRVQCMKVWPPLGKKKYETLSYLPDLTEVQLAKEVDYLLRNKWVPCLEFELEHGFVYRENARSPGYYDGRYWTMWKLPMFGCTDSAQVMKELQECKKEYPQAWIRIIGFDNVRQVQCISFIASKPGGF</sequence>
<accession>Q39743</accession>
<name>RBS1_FLAPR</name>
<dbReference type="EMBL" id="U29933">
    <property type="protein sequence ID" value="AAB67845.1"/>
    <property type="molecule type" value="mRNA"/>
</dbReference>
<dbReference type="SMR" id="Q39743"/>
<dbReference type="GO" id="GO:0009507">
    <property type="term" value="C:chloroplast"/>
    <property type="evidence" value="ECO:0007669"/>
    <property type="project" value="UniProtKB-SubCell"/>
</dbReference>
<dbReference type="GO" id="GO:0016984">
    <property type="term" value="F:ribulose-bisphosphate carboxylase activity"/>
    <property type="evidence" value="ECO:0007669"/>
    <property type="project" value="UniProtKB-UniRule"/>
</dbReference>
<dbReference type="GO" id="GO:0009853">
    <property type="term" value="P:photorespiration"/>
    <property type="evidence" value="ECO:0007669"/>
    <property type="project" value="UniProtKB-KW"/>
</dbReference>
<dbReference type="GO" id="GO:0019253">
    <property type="term" value="P:reductive pentose-phosphate cycle"/>
    <property type="evidence" value="ECO:0007669"/>
    <property type="project" value="UniProtKB-UniRule"/>
</dbReference>
<dbReference type="CDD" id="cd03527">
    <property type="entry name" value="RuBisCO_small"/>
    <property type="match status" value="1"/>
</dbReference>
<dbReference type="FunFam" id="3.30.190.10:FF:000001">
    <property type="entry name" value="Ribulose bisphosphate carboxylase small chain, chloroplastic"/>
    <property type="match status" value="1"/>
</dbReference>
<dbReference type="Gene3D" id="3.30.190.10">
    <property type="entry name" value="Ribulose bisphosphate carboxylase, small subunit"/>
    <property type="match status" value="1"/>
</dbReference>
<dbReference type="HAMAP" id="MF_00859">
    <property type="entry name" value="RuBisCO_S_bact"/>
    <property type="match status" value="1"/>
</dbReference>
<dbReference type="InterPro" id="IPR024681">
    <property type="entry name" value="RuBisCO_ssu"/>
</dbReference>
<dbReference type="InterPro" id="IPR000894">
    <property type="entry name" value="RuBisCO_ssu_dom"/>
</dbReference>
<dbReference type="InterPro" id="IPR024680">
    <property type="entry name" value="RuBisCO_ssu_N"/>
</dbReference>
<dbReference type="InterPro" id="IPR036385">
    <property type="entry name" value="RuBisCO_ssu_sf"/>
</dbReference>
<dbReference type="PANTHER" id="PTHR31262">
    <property type="entry name" value="RIBULOSE BISPHOSPHATE CARBOXYLASE SMALL CHAIN 1, CHLOROPLASTIC"/>
    <property type="match status" value="1"/>
</dbReference>
<dbReference type="PANTHER" id="PTHR31262:SF10">
    <property type="entry name" value="RIBULOSE BISPHOSPHATE CARBOXYLASE SMALL SUBUNIT 1A, CHLOROPLASTIC-RELATED"/>
    <property type="match status" value="1"/>
</dbReference>
<dbReference type="Pfam" id="PF12338">
    <property type="entry name" value="RbcS"/>
    <property type="match status" value="1"/>
</dbReference>
<dbReference type="Pfam" id="PF00101">
    <property type="entry name" value="RuBisCO_small"/>
    <property type="match status" value="1"/>
</dbReference>
<dbReference type="PRINTS" id="PR00152">
    <property type="entry name" value="RUBISCOSMALL"/>
</dbReference>
<dbReference type="SMART" id="SM00961">
    <property type="entry name" value="RuBisCO_small"/>
    <property type="match status" value="1"/>
</dbReference>
<dbReference type="SUPFAM" id="SSF55239">
    <property type="entry name" value="RuBisCO, small subunit"/>
    <property type="match status" value="1"/>
</dbReference>
<proteinExistence type="evidence at transcript level"/>
<organism>
    <name type="scientific">Flaveria pringlei</name>
    <dbReference type="NCBI Taxonomy" id="4226"/>
    <lineage>
        <taxon>Eukaryota</taxon>
        <taxon>Viridiplantae</taxon>
        <taxon>Streptophyta</taxon>
        <taxon>Embryophyta</taxon>
        <taxon>Tracheophyta</taxon>
        <taxon>Spermatophyta</taxon>
        <taxon>Magnoliopsida</taxon>
        <taxon>eudicotyledons</taxon>
        <taxon>Gunneridae</taxon>
        <taxon>Pentapetalae</taxon>
        <taxon>asterids</taxon>
        <taxon>campanulids</taxon>
        <taxon>Asterales</taxon>
        <taxon>Asteraceae</taxon>
        <taxon>Asteroideae</taxon>
        <taxon>Heliantheae alliance</taxon>
        <taxon>Tageteae</taxon>
        <taxon>Flaveria</taxon>
    </lineage>
</organism>
<evidence type="ECO:0000255" key="1">
    <source>
        <dbReference type="HAMAP-Rule" id="MF_00860"/>
    </source>
</evidence>
<protein>
    <recommendedName>
        <fullName evidence="1">Ribulose bisphosphate carboxylase small subunit, chloroplastic 1</fullName>
        <shortName evidence="1">RuBisCO small subunit 1</shortName>
    </recommendedName>
</protein>
<reference key="1">
    <citation type="online journal article" date="1996" name="Plant Gene Register">
        <title>Sequences of seven cDNAs encoding the Rubisco small subunit from Flaveria pringlei.</title>
        <authorList>
            <person name="McGonigle B."/>
            <person name="Lai L.B."/>
            <person name="Nelson T."/>
        </authorList>
        <locator>PGR96-057</locator>
    </citation>
    <scope>NUCLEOTIDE SEQUENCE [MRNA]</scope>
    <source>
        <tissue>Leaf</tissue>
    </source>
</reference>
<keyword id="KW-0113">Calvin cycle</keyword>
<keyword id="KW-0120">Carbon dioxide fixation</keyword>
<keyword id="KW-0150">Chloroplast</keyword>
<keyword id="KW-0601">Photorespiration</keyword>
<keyword id="KW-0602">Photosynthesis</keyword>
<keyword id="KW-0934">Plastid</keyword>
<keyword id="KW-0809">Transit peptide</keyword>